<comment type="function">
    <text evidence="1">Binds 16S rRNA, required for the assembly of 30S particles and may also be responsible for determining the conformation of the 16S rRNA at the A site.</text>
</comment>
<comment type="subunit">
    <text evidence="1">Part of the 30S ribosomal subunit. Contacts proteins S3 and S10.</text>
</comment>
<comment type="similarity">
    <text evidence="1">Belongs to the universal ribosomal protein uS14 family.</text>
</comment>
<gene>
    <name evidence="1" type="primary">rpsN</name>
    <name type="ordered locus">ECSE_3582</name>
</gene>
<reference key="1">
    <citation type="journal article" date="2008" name="DNA Res.">
        <title>Complete genome sequence and comparative analysis of the wild-type commensal Escherichia coli strain SE11 isolated from a healthy adult.</title>
        <authorList>
            <person name="Oshima K."/>
            <person name="Toh H."/>
            <person name="Ogura Y."/>
            <person name="Sasamoto H."/>
            <person name="Morita H."/>
            <person name="Park S.-H."/>
            <person name="Ooka T."/>
            <person name="Iyoda S."/>
            <person name="Taylor T.D."/>
            <person name="Hayashi T."/>
            <person name="Itoh K."/>
            <person name="Hattori M."/>
        </authorList>
    </citation>
    <scope>NUCLEOTIDE SEQUENCE [LARGE SCALE GENOMIC DNA]</scope>
    <source>
        <strain>SE11</strain>
    </source>
</reference>
<sequence>MAKQSMKAREVKRVALADKYFAKRAELKAIISDVNASDEDRWNAVLKLQTLPRDSSPSRQRNRCRQTGRPHGFLRKFGLSRIKVREAAMRGEIPGLKKASW</sequence>
<accession>B6I221</accession>
<dbReference type="EMBL" id="AP009240">
    <property type="protein sequence ID" value="BAG79106.1"/>
    <property type="molecule type" value="Genomic_DNA"/>
</dbReference>
<dbReference type="RefSeq" id="WP_001118930.1">
    <property type="nucleotide sequence ID" value="NC_011415.1"/>
</dbReference>
<dbReference type="SMR" id="B6I221"/>
<dbReference type="GeneID" id="93778680"/>
<dbReference type="KEGG" id="ecy:ECSE_3582"/>
<dbReference type="HOGENOM" id="CLU_139869_0_1_6"/>
<dbReference type="Proteomes" id="UP000008199">
    <property type="component" value="Chromosome"/>
</dbReference>
<dbReference type="GO" id="GO:0005737">
    <property type="term" value="C:cytoplasm"/>
    <property type="evidence" value="ECO:0007669"/>
    <property type="project" value="UniProtKB-ARBA"/>
</dbReference>
<dbReference type="GO" id="GO:0015935">
    <property type="term" value="C:small ribosomal subunit"/>
    <property type="evidence" value="ECO:0007669"/>
    <property type="project" value="TreeGrafter"/>
</dbReference>
<dbReference type="GO" id="GO:0019843">
    <property type="term" value="F:rRNA binding"/>
    <property type="evidence" value="ECO:0007669"/>
    <property type="project" value="UniProtKB-UniRule"/>
</dbReference>
<dbReference type="GO" id="GO:0003735">
    <property type="term" value="F:structural constituent of ribosome"/>
    <property type="evidence" value="ECO:0007669"/>
    <property type="project" value="InterPro"/>
</dbReference>
<dbReference type="GO" id="GO:0006412">
    <property type="term" value="P:translation"/>
    <property type="evidence" value="ECO:0007669"/>
    <property type="project" value="UniProtKB-UniRule"/>
</dbReference>
<dbReference type="FunFam" id="1.10.287.1480:FF:000001">
    <property type="entry name" value="30S ribosomal protein S14"/>
    <property type="match status" value="1"/>
</dbReference>
<dbReference type="Gene3D" id="1.10.287.1480">
    <property type="match status" value="1"/>
</dbReference>
<dbReference type="HAMAP" id="MF_00537">
    <property type="entry name" value="Ribosomal_uS14_1"/>
    <property type="match status" value="1"/>
</dbReference>
<dbReference type="InterPro" id="IPR001209">
    <property type="entry name" value="Ribosomal_uS14"/>
</dbReference>
<dbReference type="InterPro" id="IPR023036">
    <property type="entry name" value="Ribosomal_uS14_bac/plastid"/>
</dbReference>
<dbReference type="InterPro" id="IPR018271">
    <property type="entry name" value="Ribosomal_uS14_CS"/>
</dbReference>
<dbReference type="NCBIfam" id="NF006477">
    <property type="entry name" value="PRK08881.1"/>
    <property type="match status" value="1"/>
</dbReference>
<dbReference type="PANTHER" id="PTHR19836">
    <property type="entry name" value="30S RIBOSOMAL PROTEIN S14"/>
    <property type="match status" value="1"/>
</dbReference>
<dbReference type="PANTHER" id="PTHR19836:SF19">
    <property type="entry name" value="SMALL RIBOSOMAL SUBUNIT PROTEIN US14M"/>
    <property type="match status" value="1"/>
</dbReference>
<dbReference type="Pfam" id="PF00253">
    <property type="entry name" value="Ribosomal_S14"/>
    <property type="match status" value="1"/>
</dbReference>
<dbReference type="SUPFAM" id="SSF57716">
    <property type="entry name" value="Glucocorticoid receptor-like (DNA-binding domain)"/>
    <property type="match status" value="1"/>
</dbReference>
<dbReference type="PROSITE" id="PS00527">
    <property type="entry name" value="RIBOSOMAL_S14"/>
    <property type="match status" value="1"/>
</dbReference>
<feature type="chain" id="PRO_1000128392" description="Small ribosomal subunit protein uS14">
    <location>
        <begin position="1"/>
        <end position="101"/>
    </location>
</feature>
<proteinExistence type="inferred from homology"/>
<name>RS14_ECOSE</name>
<organism>
    <name type="scientific">Escherichia coli (strain SE11)</name>
    <dbReference type="NCBI Taxonomy" id="409438"/>
    <lineage>
        <taxon>Bacteria</taxon>
        <taxon>Pseudomonadati</taxon>
        <taxon>Pseudomonadota</taxon>
        <taxon>Gammaproteobacteria</taxon>
        <taxon>Enterobacterales</taxon>
        <taxon>Enterobacteriaceae</taxon>
        <taxon>Escherichia</taxon>
    </lineage>
</organism>
<protein>
    <recommendedName>
        <fullName evidence="1">Small ribosomal subunit protein uS14</fullName>
    </recommendedName>
    <alternativeName>
        <fullName evidence="2">30S ribosomal protein S14</fullName>
    </alternativeName>
</protein>
<keyword id="KW-0687">Ribonucleoprotein</keyword>
<keyword id="KW-0689">Ribosomal protein</keyword>
<keyword id="KW-0694">RNA-binding</keyword>
<keyword id="KW-0699">rRNA-binding</keyword>
<evidence type="ECO:0000255" key="1">
    <source>
        <dbReference type="HAMAP-Rule" id="MF_00537"/>
    </source>
</evidence>
<evidence type="ECO:0000305" key="2"/>